<name>OLF1_RAT</name>
<protein>
    <recommendedName>
        <fullName>Olfactory receptor 1</fullName>
    </recommendedName>
    <alternativeName>
        <fullName>Olfactory receptor 1469</fullName>
    </alternativeName>
    <alternativeName>
        <fullName>Olfactory receptor HGL-SP1</fullName>
    </alternativeName>
    <alternativeName>
        <fullName>Olfactory receptor OR5</fullName>
    </alternativeName>
    <alternativeName>
        <fullName>Olfactory receptor-like protein I54</fullName>
    </alternativeName>
</protein>
<evidence type="ECO:0000250" key="1">
    <source>
        <dbReference type="UniProtKB" id="Q8VGI1"/>
    </source>
</evidence>
<evidence type="ECO:0000255" key="2"/>
<evidence type="ECO:0000255" key="3">
    <source>
        <dbReference type="PROSITE-ProRule" id="PRU00521"/>
    </source>
</evidence>
<evidence type="ECO:0000269" key="4">
    <source>
    </source>
</evidence>
<evidence type="ECO:0000269" key="5">
    <source>
    </source>
</evidence>
<evidence type="ECO:0000269" key="6">
    <source>
    </source>
</evidence>
<evidence type="ECO:0000305" key="7"/>
<evidence type="ECO:0000312" key="8">
    <source>
        <dbReference type="EMBL" id="AAA41738.1"/>
    </source>
</evidence>
<evidence type="ECO:0000312" key="9">
    <source>
        <dbReference type="EMBL" id="AAC64592.1"/>
    </source>
</evidence>
<evidence type="ECO:0000312" key="10">
    <source>
        <dbReference type="EMBL" id="CAA68842.1"/>
    </source>
</evidence>
<evidence type="ECO:0000312" key="11">
    <source>
        <dbReference type="PIR" id="S29707"/>
    </source>
</evidence>
<evidence type="ECO:0000312" key="12">
    <source>
        <dbReference type="RGD" id="1359186"/>
    </source>
</evidence>
<feature type="chain" id="PRO_0000233899" description="Olfactory receptor 1">
    <location>
        <begin position="1"/>
        <end position="314"/>
    </location>
</feature>
<feature type="topological domain" description="Extracellular" evidence="2">
    <location>
        <begin position="1"/>
        <end position="29"/>
    </location>
</feature>
<feature type="transmembrane region" description="Helical; Name=1" evidence="2">
    <location>
        <begin position="30"/>
        <end position="50"/>
    </location>
</feature>
<feature type="topological domain" description="Cytoplasmic" evidence="2">
    <location>
        <begin position="51"/>
        <end position="59"/>
    </location>
</feature>
<feature type="transmembrane region" description="Helical; Name=2" evidence="2">
    <location>
        <begin position="60"/>
        <end position="81"/>
    </location>
</feature>
<feature type="topological domain" description="Extracellular" evidence="2">
    <location>
        <begin position="82"/>
        <end position="97"/>
    </location>
</feature>
<feature type="transmembrane region" description="Helical; Name=3" evidence="2">
    <location>
        <begin position="98"/>
        <end position="118"/>
    </location>
</feature>
<feature type="topological domain" description="Cytoplasmic" evidence="2">
    <location>
        <begin position="119"/>
        <end position="143"/>
    </location>
</feature>
<feature type="transmembrane region" description="Helical; Name=4" evidence="2">
    <location>
        <begin position="144"/>
        <end position="164"/>
    </location>
</feature>
<feature type="topological domain" description="Extracellular" evidence="2">
    <location>
        <begin position="165"/>
        <end position="196"/>
    </location>
</feature>
<feature type="transmembrane region" description="Helical; Name=5" evidence="2">
    <location>
        <begin position="197"/>
        <end position="217"/>
    </location>
</feature>
<feature type="topological domain" description="Cytoplasmic" evidence="2">
    <location>
        <begin position="218"/>
        <end position="240"/>
    </location>
</feature>
<feature type="transmembrane region" description="Helical; Name=6" evidence="2">
    <location>
        <begin position="241"/>
        <end position="261"/>
    </location>
</feature>
<feature type="topological domain" description="Extracellular" evidence="2">
    <location>
        <begin position="262"/>
        <end position="271"/>
    </location>
</feature>
<feature type="transmembrane region" description="Helical; Name=7" evidence="2">
    <location>
        <begin position="272"/>
        <end position="292"/>
    </location>
</feature>
<feature type="topological domain" description="Cytoplasmic" evidence="2">
    <location>
        <begin position="293"/>
        <end position="314"/>
    </location>
</feature>
<feature type="glycosylation site" description="N-linked (GlcNAc...) asparagine" evidence="2">
    <location>
        <position position="5"/>
    </location>
</feature>
<feature type="glycosylation site" description="N-linked (GlcNAc...) asparagine" evidence="2">
    <location>
        <position position="265"/>
    </location>
</feature>
<feature type="glycosylation site" description="N-linked (GlcNAc...) asparagine" evidence="2">
    <location>
        <position position="266"/>
    </location>
</feature>
<feature type="disulfide bond" evidence="3">
    <location>
        <begin position="97"/>
        <end position="179"/>
    </location>
</feature>
<feature type="sequence conflict" description="In Ref. 2; AAC64592." evidence="7" ref="2">
    <original>M</original>
    <variation>T</variation>
    <location>
        <position position="181"/>
    </location>
</feature>
<feature type="sequence conflict" description="In Ref. 2; AAC64592." evidence="7" ref="2">
    <original>K</original>
    <variation>E</variation>
    <location>
        <position position="236"/>
    </location>
</feature>
<organism>
    <name type="scientific">Rattus norvegicus</name>
    <name type="common">Rat</name>
    <dbReference type="NCBI Taxonomy" id="10116"/>
    <lineage>
        <taxon>Eukaryota</taxon>
        <taxon>Metazoa</taxon>
        <taxon>Chordata</taxon>
        <taxon>Craniata</taxon>
        <taxon>Vertebrata</taxon>
        <taxon>Euteleostomi</taxon>
        <taxon>Mammalia</taxon>
        <taxon>Eutheria</taxon>
        <taxon>Euarchontoglires</taxon>
        <taxon>Glires</taxon>
        <taxon>Rodentia</taxon>
        <taxon>Myomorpha</taxon>
        <taxon>Muroidea</taxon>
        <taxon>Muridae</taxon>
        <taxon>Murinae</taxon>
        <taxon>Rattus</taxon>
    </lineage>
</organism>
<gene>
    <name evidence="1" type="primary">Olfr1</name>
    <name evidence="12" type="synonym">Olr1469</name>
</gene>
<comment type="function">
    <text evidence="4 5">Odorant receptor. Activated by a lily-derived aldehyde as well as other odorants. May signal through an inositol 1,4,5-trisphosphate (IP3) second messenger system.</text>
</comment>
<comment type="subcellular location">
    <subcellularLocation>
        <location>Cell membrane</location>
        <topology evidence="2">Multi-pass membrane protein</topology>
    </subcellularLocation>
</comment>
<comment type="tissue specificity">
    <text evidence="5">Olfactory epithelium.</text>
</comment>
<comment type="similarity">
    <text evidence="3">Belongs to the G-protein coupled receptor 1 family.</text>
</comment>
<keyword id="KW-1003">Cell membrane</keyword>
<keyword id="KW-1015">Disulfide bond</keyword>
<keyword id="KW-0297">G-protein coupled receptor</keyword>
<keyword id="KW-0325">Glycoprotein</keyword>
<keyword id="KW-0472">Membrane</keyword>
<keyword id="KW-0552">Olfaction</keyword>
<keyword id="KW-0675">Receptor</keyword>
<keyword id="KW-1185">Reference proteome</keyword>
<keyword id="KW-0716">Sensory transduction</keyword>
<keyword id="KW-0807">Transducer</keyword>
<keyword id="KW-0812">Transmembrane</keyword>
<keyword id="KW-1133">Transmembrane helix</keyword>
<sequence>MTERNQTVISQFLLLGLPIPPEHQHVFYALFLSMYLTTVLGNLIIIILILLDSHLHTPMYLFLSNLSFSDLCFSSVTMPKLLQNMQSQVPSIPYAGCLSQIYFFLFFGDLGNFLLVAMAYDRYVAICFPLHYMSIMSPKLCVSLVVLSWVLTTFHAMLHTLLMARLSFCEDNVIPHFFCDMSALLKLACSDTRVNEVVIFIVVSLFLVLPFALIIMSYVRIVSSILKVPSSQGIYKAFSTCGSHLSVVSLFYGTVIGLYLCPSSNNSTVKETVMSLMYTVVTPMLNPFIYSLRNRDIKGAMERIFCKRKIQLNL</sequence>
<dbReference type="EMBL" id="Y07557">
    <property type="protein sequence ID" value="CAA68842.1"/>
    <property type="molecule type" value="mRNA"/>
</dbReference>
<dbReference type="EMBL" id="AF091571">
    <property type="protein sequence ID" value="AAC64592.1"/>
    <property type="molecule type" value="mRNA"/>
</dbReference>
<dbReference type="EMBL" id="M64375">
    <property type="protein sequence ID" value="AAA41738.1"/>
    <property type="molecule type" value="mRNA"/>
</dbReference>
<dbReference type="PIR" id="S29707">
    <property type="entry name" value="S29707"/>
</dbReference>
<dbReference type="RefSeq" id="NP_997692.1">
    <property type="nucleotide sequence ID" value="NM_212527.1"/>
</dbReference>
<dbReference type="RefSeq" id="XP_003750900.1">
    <property type="nucleotide sequence ID" value="XM_003750852.1"/>
</dbReference>
<dbReference type="RefSeq" id="XP_008766355.1">
    <property type="nucleotide sequence ID" value="XM_008768133.1"/>
</dbReference>
<dbReference type="SMR" id="P70526"/>
<dbReference type="FunCoup" id="P70526">
    <property type="interactions" value="1005"/>
</dbReference>
<dbReference type="STRING" id="10116.ENSRNOP00000066076"/>
<dbReference type="GlyCosmos" id="P70526">
    <property type="glycosylation" value="3 sites, No reported glycans"/>
</dbReference>
<dbReference type="GlyGen" id="P70526">
    <property type="glycosylation" value="3 sites"/>
</dbReference>
<dbReference type="PhosphoSitePlus" id="P70526"/>
<dbReference type="PaxDb" id="10116-ENSRNOP00000066076"/>
<dbReference type="Ensembl" id="ENSRNOT00000102523.1">
    <property type="protein sequence ID" value="ENSRNOP00000080919.1"/>
    <property type="gene ID" value="ENSRNOG00000067008.1"/>
</dbReference>
<dbReference type="Ensembl" id="ENSRNOT00000120256.1">
    <property type="protein sequence ID" value="ENSRNOP00000094670.1"/>
    <property type="gene ID" value="ENSRNOG00000067008.1"/>
</dbReference>
<dbReference type="GeneID" id="404976"/>
<dbReference type="KEGG" id="rno:404976"/>
<dbReference type="AGR" id="RGD:1359186"/>
<dbReference type="CTD" id="404976"/>
<dbReference type="RGD" id="1359186">
    <property type="gene designation" value="Olr1469"/>
</dbReference>
<dbReference type="VEuPathDB" id="HostDB:ENSRNOG00000065934"/>
<dbReference type="eggNOG" id="ENOG502SI5J">
    <property type="taxonomic scope" value="Eukaryota"/>
</dbReference>
<dbReference type="GeneTree" id="ENSGT00940000153124"/>
<dbReference type="HOGENOM" id="CLU_012526_5_5_1"/>
<dbReference type="InParanoid" id="P70526"/>
<dbReference type="OMA" id="TMTERNQ"/>
<dbReference type="OrthoDB" id="9975554at2759"/>
<dbReference type="PhylomeDB" id="P70526"/>
<dbReference type="TreeFam" id="TF337210"/>
<dbReference type="PRO" id="PR:P70526"/>
<dbReference type="Proteomes" id="UP000002494">
    <property type="component" value="Chromosome 10"/>
</dbReference>
<dbReference type="GO" id="GO:0005886">
    <property type="term" value="C:plasma membrane"/>
    <property type="evidence" value="ECO:0000318"/>
    <property type="project" value="GO_Central"/>
</dbReference>
<dbReference type="GO" id="GO:0038022">
    <property type="term" value="F:G protein-coupled olfactory receptor activity"/>
    <property type="evidence" value="ECO:0000266"/>
    <property type="project" value="RGD"/>
</dbReference>
<dbReference type="GO" id="GO:0004984">
    <property type="term" value="F:olfactory receptor activity"/>
    <property type="evidence" value="ECO:0000318"/>
    <property type="project" value="GO_Central"/>
</dbReference>
<dbReference type="GO" id="GO:0007189">
    <property type="term" value="P:adenylate cyclase-activating G protein-coupled receptor signaling pathway"/>
    <property type="evidence" value="ECO:0000266"/>
    <property type="project" value="RGD"/>
</dbReference>
<dbReference type="GO" id="GO:0007165">
    <property type="term" value="P:signal transduction"/>
    <property type="evidence" value="ECO:0000318"/>
    <property type="project" value="GO_Central"/>
</dbReference>
<dbReference type="CDD" id="cd15918">
    <property type="entry name" value="7tmA_OR1_7-like"/>
    <property type="match status" value="1"/>
</dbReference>
<dbReference type="FunFam" id="1.10.1220.70:FF:000001">
    <property type="entry name" value="Olfactory receptor"/>
    <property type="match status" value="1"/>
</dbReference>
<dbReference type="FunFam" id="1.20.1070.10:FF:000009">
    <property type="entry name" value="Olfactory receptor"/>
    <property type="match status" value="1"/>
</dbReference>
<dbReference type="Gene3D" id="1.20.1070.10">
    <property type="entry name" value="Rhodopsin 7-helix transmembrane proteins"/>
    <property type="match status" value="1"/>
</dbReference>
<dbReference type="InterPro" id="IPR000276">
    <property type="entry name" value="GPCR_Rhodpsn"/>
</dbReference>
<dbReference type="InterPro" id="IPR017452">
    <property type="entry name" value="GPCR_Rhodpsn_7TM"/>
</dbReference>
<dbReference type="InterPro" id="IPR000725">
    <property type="entry name" value="Olfact_rcpt"/>
</dbReference>
<dbReference type="PANTHER" id="PTHR48001">
    <property type="entry name" value="OLFACTORY RECEPTOR"/>
    <property type="match status" value="1"/>
</dbReference>
<dbReference type="Pfam" id="PF13853">
    <property type="entry name" value="7tm_4"/>
    <property type="match status" value="1"/>
</dbReference>
<dbReference type="PRINTS" id="PR00237">
    <property type="entry name" value="GPCRRHODOPSN"/>
</dbReference>
<dbReference type="PRINTS" id="PR00245">
    <property type="entry name" value="OLFACTORYR"/>
</dbReference>
<dbReference type="SUPFAM" id="SSF81321">
    <property type="entry name" value="Family A G protein-coupled receptor-like"/>
    <property type="match status" value="1"/>
</dbReference>
<dbReference type="PROSITE" id="PS00237">
    <property type="entry name" value="G_PROTEIN_RECEP_F1_1"/>
    <property type="match status" value="1"/>
</dbReference>
<dbReference type="PROSITE" id="PS50262">
    <property type="entry name" value="G_PROTEIN_RECEP_F1_2"/>
    <property type="match status" value="1"/>
</dbReference>
<accession>P70526</accession>
<accession>Q04059</accession>
<accession>Q9QWW7</accession>
<reference evidence="7 10 11" key="1">
    <citation type="journal article" date="1993" name="Nature">
        <title>Cloning and expression of odorant receptors.</title>
        <authorList>
            <person name="Raming K."/>
            <person name="Krieger J."/>
            <person name="Strotmann J."/>
            <person name="Boekhoff I."/>
            <person name="Kubick S."/>
            <person name="Baumstark C."/>
            <person name="Breer H."/>
        </authorList>
    </citation>
    <scope>NUCLEOTIDE SEQUENCE [MRNA]</scope>
    <scope>FUNCTION</scope>
    <scope>TISSUE SPECIFICITY</scope>
    <source>
        <tissue evidence="10">Olfactory epithelium</tissue>
    </source>
</reference>
<reference evidence="7 9" key="2">
    <citation type="journal article" date="1998" name="NeuroReport">
        <title>Identification of olfactory receptor mRNA sequences from the rat olfactory bulb glomerular layer.</title>
        <authorList>
            <person name="Singer M.S."/>
            <person name="Hughes T.E."/>
            <person name="Shepherd G.M."/>
            <person name="Greer C.A."/>
        </authorList>
    </citation>
    <scope>NUCLEOTIDE SEQUENCE [MRNA] OF 64-284</scope>
    <source>
        <strain evidence="6">Sprague-Dawley</strain>
        <tissue evidence="6">Olfactory bulb</tissue>
    </source>
</reference>
<reference evidence="8" key="3">
    <citation type="journal article" date="1991" name="Cell">
        <title>A novel multigene family may encode odorant receptors: a molecular basis for odor recognition.</title>
        <authorList>
            <person name="Buck L."/>
            <person name="Axel R."/>
        </authorList>
    </citation>
    <scope>NUCLEOTIDE SEQUENCE [MRNA] OF 193-236</scope>
    <source>
        <strain evidence="8">Sprague-Dawley</strain>
        <tissue evidence="8">Olfactory epithelium</tissue>
    </source>
</reference>
<reference evidence="7" key="4">
    <citation type="journal article" date="1990" name="EMBO J.">
        <title>Rapid activation of alternative second messenger pathways in olfactory cilia from rats by different odorants.</title>
        <authorList>
            <person name="Boekhoff I."/>
            <person name="Tareilus E."/>
            <person name="Strotmann J."/>
            <person name="Breer H."/>
        </authorList>
    </citation>
    <scope>FUNCTION</scope>
</reference>
<proteinExistence type="evidence at transcript level"/>